<organism>
    <name type="scientific">Haemophilus influenzae (strain ATCC 51907 / DSM 11121 / KW20 / Rd)</name>
    <dbReference type="NCBI Taxonomy" id="71421"/>
    <lineage>
        <taxon>Bacteria</taxon>
        <taxon>Pseudomonadati</taxon>
        <taxon>Pseudomonadota</taxon>
        <taxon>Gammaproteobacteria</taxon>
        <taxon>Pasteurellales</taxon>
        <taxon>Pasteurellaceae</taxon>
        <taxon>Haemophilus</taxon>
    </lineage>
</organism>
<dbReference type="EMBL" id="L42023">
    <property type="protein sequence ID" value="AAC23154.1"/>
    <property type="molecule type" value="Genomic_DNA"/>
</dbReference>
<dbReference type="PIR" id="I64126">
    <property type="entry name" value="I64126"/>
</dbReference>
<dbReference type="RefSeq" id="NP_439654.1">
    <property type="nucleotide sequence ID" value="NC_000907.1"/>
</dbReference>
<dbReference type="SMR" id="O05073"/>
<dbReference type="STRING" id="71421.HI_1504"/>
<dbReference type="EnsemblBacteria" id="AAC23154">
    <property type="protein sequence ID" value="AAC23154"/>
    <property type="gene ID" value="HI_1504"/>
</dbReference>
<dbReference type="KEGG" id="hin:HI_1504"/>
<dbReference type="PATRIC" id="fig|71421.8.peg.1574"/>
<dbReference type="eggNOG" id="COG4388">
    <property type="taxonomic scope" value="Bacteria"/>
</dbReference>
<dbReference type="HOGENOM" id="CLU_062795_1_0_6"/>
<dbReference type="OrthoDB" id="2043985at2"/>
<dbReference type="PhylomeDB" id="O05073"/>
<dbReference type="BioCyc" id="HINF71421:G1GJ1-1528-MONOMER"/>
<dbReference type="Proteomes" id="UP000000579">
    <property type="component" value="Chromosome"/>
</dbReference>
<dbReference type="GO" id="GO:0008233">
    <property type="term" value="F:peptidase activity"/>
    <property type="evidence" value="ECO:0007669"/>
    <property type="project" value="UniProtKB-KW"/>
</dbReference>
<dbReference type="GO" id="GO:0006508">
    <property type="term" value="P:proteolysis"/>
    <property type="evidence" value="ECO:0007669"/>
    <property type="project" value="UniProtKB-KW"/>
</dbReference>
<dbReference type="InterPro" id="IPR012106">
    <property type="entry name" value="Phage_Mu_Gp1"/>
</dbReference>
<dbReference type="Pfam" id="PF10123">
    <property type="entry name" value="Mu-like_Pro"/>
    <property type="match status" value="1"/>
</dbReference>
<dbReference type="PIRSF" id="PIRSF016624">
    <property type="entry name" value="Mu_prophg_I"/>
    <property type="match status" value="1"/>
</dbReference>
<reference key="1">
    <citation type="journal article" date="1995" name="Science">
        <title>Whole-genome random sequencing and assembly of Haemophilus influenzae Rd.</title>
        <authorList>
            <person name="Fleischmann R.D."/>
            <person name="Adams M.D."/>
            <person name="White O."/>
            <person name="Clayton R.A."/>
            <person name="Kirkness E.F."/>
            <person name="Kerlavage A.R."/>
            <person name="Bult C.J."/>
            <person name="Tomb J.-F."/>
            <person name="Dougherty B.A."/>
            <person name="Merrick J.M."/>
            <person name="McKenney K."/>
            <person name="Sutton G.G."/>
            <person name="FitzHugh W."/>
            <person name="Fields C.A."/>
            <person name="Gocayne J.D."/>
            <person name="Scott J.D."/>
            <person name="Shirley R."/>
            <person name="Liu L.-I."/>
            <person name="Glodek A."/>
            <person name="Kelley J.M."/>
            <person name="Weidman J.F."/>
            <person name="Phillips C.A."/>
            <person name="Spriggs T."/>
            <person name="Hedblom E."/>
            <person name="Cotton M.D."/>
            <person name="Utterback T.R."/>
            <person name="Hanna M.C."/>
            <person name="Nguyen D.T."/>
            <person name="Saudek D.M."/>
            <person name="Brandon R.C."/>
            <person name="Fine L.D."/>
            <person name="Fritchman J.L."/>
            <person name="Fuhrmann J.L."/>
            <person name="Geoghagen N.S.M."/>
            <person name="Gnehm C.L."/>
            <person name="McDonald L.A."/>
            <person name="Small K.V."/>
            <person name="Fraser C.M."/>
            <person name="Smith H.O."/>
            <person name="Venter J.C."/>
        </authorList>
    </citation>
    <scope>NUCLEOTIDE SEQUENCE [LARGE SCALE GENOMIC DNA]</scope>
    <source>
        <strain>ATCC 51907 / DSM 11121 / KW20 / Rd</strain>
    </source>
</reference>
<feature type="chain" id="PRO_0000079188" description="Mu-like prophage FluMu I protein">
    <location>
        <begin position="1"/>
        <end position="355"/>
    </location>
</feature>
<gene>
    <name type="ordered locus">HI_1504</name>
</gene>
<accession>O05073</accession>
<keyword id="KW-0378">Hydrolase</keyword>
<keyword id="KW-0645">Protease</keyword>
<keyword id="KW-1185">Reference proteome</keyword>
<proteinExistence type="inferred from homology"/>
<comment type="function">
    <text evidence="1">Potential protease involved in virion morphogenesis.</text>
</comment>
<comment type="similarity">
    <text evidence="2">Belongs to the peptidase U35 family.</text>
</comment>
<sequence length="355" mass="39026">MKAEKTSLAVLTAQLTSPDGWQQLLPKGEFRSRDGSPTDVAHWFIDGTIAQNLIHKARQLNQDLLVDYDHETILKAKKGIDAGNVVAAGWFNADEIQWFDDETRQGLYIKPRWTPKAYQQIKDGEFAFLSAVFPYDENGTPLELRMAALTNDPGITGMQRLAVLSATLNPQENVKMPESLRKLLAKLGVEIAEGVELTEEQANTALNALETLQTDKTKADEQVATLSAKNTEVDLSQYVPKATYDAVMSQVAVLSAKTDDVEIDNHISKARNEGRAVEAEVEYLKQFGKQQGVAALSAMLEKRPQIAVLSAQQTQTTKVEKPVEKGTAVLSAADKEAAKLLGISEQDYAKELEAK</sequence>
<protein>
    <recommendedName>
        <fullName>Mu-like prophage FluMu I protein</fullName>
    </recommendedName>
</protein>
<evidence type="ECO:0000250" key="1"/>
<evidence type="ECO:0000305" key="2"/>
<name>VPI_HAEIN</name>